<sequence length="446" mass="49004">MPGLRHPSVLRAMTRAVADVSAARSALQVLGPRPDHELVDSSRAIVAATDAEAGGSRRVPEGDLEACRAVVRLEETHDAYEALLQEAEGRLEAVYRSAMEGKDLEEPDGRDESAAAAAGDDAAVQEEVIAVLRQAEEGKPVESVRLVDRQLRHLPEAFGRIQGLRVLDVSRNQLEVIPDAIGGLDHLEELRLASNALISLPDSIGLLLNLRILNVGSNRLRSLPDSISKCRSLIELDASYNGLAYLPTNIGYELVNLRKLWVHMNKLRSLPSSICEMRSLYLLDAHFNELCGLPSAIGKLSSLEILNLSSNFSDLKDLPASFGDLLNLRELDLSNNQIHALPDNFGRLDKLEKLNLEQNPLSMPPMEIVNKGVDAVKEYMLQRWLDILLEEERKSIAAAESPQAPTTPSAWLARSVSWVSDVSGSLVGYLSGENKTEKDAYLDQQY</sequence>
<accession>Q7XK44</accession>
<accession>Q0JCE1</accession>
<reference key="1">
    <citation type="journal article" date="2002" name="Nature">
        <title>Sequence and analysis of rice chromosome 4.</title>
        <authorList>
            <person name="Feng Q."/>
            <person name="Zhang Y."/>
            <person name="Hao P."/>
            <person name="Wang S."/>
            <person name="Fu G."/>
            <person name="Huang Y."/>
            <person name="Li Y."/>
            <person name="Zhu J."/>
            <person name="Liu Y."/>
            <person name="Hu X."/>
            <person name="Jia P."/>
            <person name="Zhang Y."/>
            <person name="Zhao Q."/>
            <person name="Ying K."/>
            <person name="Yu S."/>
            <person name="Tang Y."/>
            <person name="Weng Q."/>
            <person name="Zhang L."/>
            <person name="Lu Y."/>
            <person name="Mu J."/>
            <person name="Lu Y."/>
            <person name="Zhang L.S."/>
            <person name="Yu Z."/>
            <person name="Fan D."/>
            <person name="Liu X."/>
            <person name="Lu T."/>
            <person name="Li C."/>
            <person name="Wu Y."/>
            <person name="Sun T."/>
            <person name="Lei H."/>
            <person name="Li T."/>
            <person name="Hu H."/>
            <person name="Guan J."/>
            <person name="Wu M."/>
            <person name="Zhang R."/>
            <person name="Zhou B."/>
            <person name="Chen Z."/>
            <person name="Chen L."/>
            <person name="Jin Z."/>
            <person name="Wang R."/>
            <person name="Yin H."/>
            <person name="Cai Z."/>
            <person name="Ren S."/>
            <person name="Lv G."/>
            <person name="Gu W."/>
            <person name="Zhu G."/>
            <person name="Tu Y."/>
            <person name="Jia J."/>
            <person name="Zhang Y."/>
            <person name="Chen J."/>
            <person name="Kang H."/>
            <person name="Chen X."/>
            <person name="Shao C."/>
            <person name="Sun Y."/>
            <person name="Hu Q."/>
            <person name="Zhang X."/>
            <person name="Zhang W."/>
            <person name="Wang L."/>
            <person name="Ding C."/>
            <person name="Sheng H."/>
            <person name="Gu J."/>
            <person name="Chen S."/>
            <person name="Ni L."/>
            <person name="Zhu F."/>
            <person name="Chen W."/>
            <person name="Lan L."/>
            <person name="Lai Y."/>
            <person name="Cheng Z."/>
            <person name="Gu M."/>
            <person name="Jiang J."/>
            <person name="Li J."/>
            <person name="Hong G."/>
            <person name="Xue Y."/>
            <person name="Han B."/>
        </authorList>
    </citation>
    <scope>NUCLEOTIDE SEQUENCE [LARGE SCALE GENOMIC DNA]</scope>
    <source>
        <strain>cv. Nipponbare</strain>
    </source>
</reference>
<reference key="2">
    <citation type="journal article" date="2005" name="Nature">
        <title>The map-based sequence of the rice genome.</title>
        <authorList>
            <consortium name="International rice genome sequencing project (IRGSP)"/>
        </authorList>
    </citation>
    <scope>NUCLEOTIDE SEQUENCE [LARGE SCALE GENOMIC DNA]</scope>
    <source>
        <strain>cv. Nipponbare</strain>
    </source>
</reference>
<reference key="3">
    <citation type="journal article" date="2008" name="Nucleic Acids Res.">
        <title>The rice annotation project database (RAP-DB): 2008 update.</title>
        <authorList>
            <consortium name="The rice annotation project (RAP)"/>
        </authorList>
    </citation>
    <scope>GENOME REANNOTATION</scope>
    <source>
        <strain>cv. Nipponbare</strain>
    </source>
</reference>
<reference key="4">
    <citation type="journal article" date="2013" name="Rice">
        <title>Improvement of the Oryza sativa Nipponbare reference genome using next generation sequence and optical map data.</title>
        <authorList>
            <person name="Kawahara Y."/>
            <person name="de la Bastide M."/>
            <person name="Hamilton J.P."/>
            <person name="Kanamori H."/>
            <person name="McCombie W.R."/>
            <person name="Ouyang S."/>
            <person name="Schwartz D.C."/>
            <person name="Tanaka T."/>
            <person name="Wu J."/>
            <person name="Zhou S."/>
            <person name="Childs K.L."/>
            <person name="Davidson R.M."/>
            <person name="Lin H."/>
            <person name="Quesada-Ocampo L."/>
            <person name="Vaillancourt B."/>
            <person name="Sakai H."/>
            <person name="Lee S.S."/>
            <person name="Kim J."/>
            <person name="Numa H."/>
            <person name="Itoh T."/>
            <person name="Buell C.R."/>
            <person name="Matsumoto T."/>
        </authorList>
    </citation>
    <scope>GENOME REANNOTATION</scope>
    <source>
        <strain>cv. Nipponbare</strain>
    </source>
</reference>
<reference key="5">
    <citation type="journal article" date="2003" name="Science">
        <title>Collection, mapping, and annotation of over 28,000 cDNA clones from japonica rice.</title>
        <authorList>
            <consortium name="The rice full-length cDNA consortium"/>
        </authorList>
    </citation>
    <scope>NUCLEOTIDE SEQUENCE [LARGE SCALE MRNA] OF 176-446</scope>
    <source>
        <strain>cv. Nipponbare</strain>
    </source>
</reference>
<reference key="6">
    <citation type="journal article" date="2010" name="Plant Mol. Biol.">
        <title>Molecular characterization, expression pattern, and functional analysis of the OsIRL gene family encoding intracellular Ras-group-related LRR proteins in rice.</title>
        <authorList>
            <person name="You C."/>
            <person name="Dai X."/>
            <person name="Li X."/>
            <person name="Wang L."/>
            <person name="Chen G."/>
            <person name="Xiao J."/>
            <person name="Wu C."/>
        </authorList>
    </citation>
    <scope>GENE FAMILY</scope>
    <scope>MOTIF GVYW</scope>
    <scope>TISSUE SPECIFICITY</scope>
    <scope>DISRUPTION PHENOTYPE</scope>
</reference>
<protein>
    <recommendedName>
        <fullName>Plant intracellular Ras-group-related LRR protein 3</fullName>
    </recommendedName>
    <alternativeName>
        <fullName>Intracellular Ras-group-related LRR protein 3</fullName>
        <shortName>OsIRL3</shortName>
    </alternativeName>
</protein>
<feature type="chain" id="PRO_0000423612" description="Plant intracellular Ras-group-related LRR protein 3">
    <location>
        <begin position="1"/>
        <end position="446"/>
    </location>
</feature>
<feature type="repeat" description="LRR 1">
    <location>
        <begin position="138"/>
        <end position="160"/>
    </location>
</feature>
<feature type="repeat" description="LRR 2">
    <location>
        <begin position="161"/>
        <end position="184"/>
    </location>
</feature>
<feature type="repeat" description="LRR 3">
    <location>
        <begin position="185"/>
        <end position="207"/>
    </location>
</feature>
<feature type="repeat" description="LRR 4">
    <location>
        <begin position="208"/>
        <end position="230"/>
    </location>
</feature>
<feature type="repeat" description="LRR 5">
    <location>
        <begin position="232"/>
        <end position="254"/>
    </location>
</feature>
<feature type="repeat" description="LRR 6">
    <location>
        <begin position="255"/>
        <end position="277"/>
    </location>
</feature>
<feature type="repeat" description="LRR 7">
    <location>
        <begin position="279"/>
        <end position="300"/>
    </location>
</feature>
<feature type="repeat" description="LRR 8">
    <location>
        <begin position="301"/>
        <end position="324"/>
    </location>
</feature>
<feature type="repeat" description="LRR 9">
    <location>
        <begin position="325"/>
        <end position="347"/>
    </location>
</feature>
<feature type="repeat" description="LRR 10">
    <location>
        <begin position="349"/>
        <end position="371"/>
    </location>
</feature>
<feature type="region of interest" description="Disordered" evidence="3">
    <location>
        <begin position="101"/>
        <end position="121"/>
    </location>
</feature>
<feature type="coiled-coil region" evidence="2">
    <location>
        <begin position="65"/>
        <end position="100"/>
    </location>
</feature>
<feature type="short sequence motif" description="GVYW">
    <location>
        <begin position="372"/>
        <end position="384"/>
    </location>
</feature>
<keyword id="KW-0175">Coiled coil</keyword>
<keyword id="KW-0433">Leucine-rich repeat</keyword>
<keyword id="KW-1185">Reference proteome</keyword>
<keyword id="KW-0677">Repeat</keyword>
<dbReference type="EMBL" id="AL606595">
    <property type="protein sequence ID" value="CAE05859.2"/>
    <property type="status" value="ALT_INIT"/>
    <property type="molecule type" value="Genomic_DNA"/>
</dbReference>
<dbReference type="EMBL" id="AP008210">
    <property type="protein sequence ID" value="BAF14996.1"/>
    <property type="status" value="ALT_SEQ"/>
    <property type="molecule type" value="Genomic_DNA"/>
</dbReference>
<dbReference type="EMBL" id="AP014960">
    <property type="status" value="NOT_ANNOTATED_CDS"/>
    <property type="molecule type" value="Genomic_DNA"/>
</dbReference>
<dbReference type="EMBL" id="AK071870">
    <property type="status" value="NOT_ANNOTATED_CDS"/>
    <property type="molecule type" value="mRNA"/>
</dbReference>
<dbReference type="SMR" id="Q7XK44"/>
<dbReference type="FunCoup" id="Q7XK44">
    <property type="interactions" value="1701"/>
</dbReference>
<dbReference type="STRING" id="39947.Q7XK44"/>
<dbReference type="PaxDb" id="39947-Q7XK44"/>
<dbReference type="KEGG" id="dosa:Os04g0476700"/>
<dbReference type="eggNOG" id="KOG0619">
    <property type="taxonomic scope" value="Eukaryota"/>
</dbReference>
<dbReference type="HOGENOM" id="CLU_000288_18_15_1"/>
<dbReference type="InParanoid" id="Q7XK44"/>
<dbReference type="Proteomes" id="UP000000763">
    <property type="component" value="Chromosome 4"/>
</dbReference>
<dbReference type="Proteomes" id="UP000059680">
    <property type="component" value="Chromosome 4"/>
</dbReference>
<dbReference type="GO" id="GO:0035556">
    <property type="term" value="P:intracellular signal transduction"/>
    <property type="evidence" value="ECO:0000318"/>
    <property type="project" value="GO_Central"/>
</dbReference>
<dbReference type="FunFam" id="3.80.10.10:FF:000405">
    <property type="entry name" value="Plant intracellular Ras-group-related LRR protein 4"/>
    <property type="match status" value="1"/>
</dbReference>
<dbReference type="Gene3D" id="3.80.10.10">
    <property type="entry name" value="Ribonuclease Inhibitor"/>
    <property type="match status" value="1"/>
</dbReference>
<dbReference type="InterPro" id="IPR001611">
    <property type="entry name" value="Leu-rich_rpt"/>
</dbReference>
<dbReference type="InterPro" id="IPR003591">
    <property type="entry name" value="Leu-rich_rpt_typical-subtyp"/>
</dbReference>
<dbReference type="InterPro" id="IPR032675">
    <property type="entry name" value="LRR_dom_sf"/>
</dbReference>
<dbReference type="InterPro" id="IPR050216">
    <property type="entry name" value="LRR_domain-containing"/>
</dbReference>
<dbReference type="PANTHER" id="PTHR48051">
    <property type="match status" value="1"/>
</dbReference>
<dbReference type="PANTHER" id="PTHR48051:SF54">
    <property type="entry name" value="LEUCINE-RICH REPEAT-CONTAINING PROTEIN"/>
    <property type="match status" value="1"/>
</dbReference>
<dbReference type="Pfam" id="PF00560">
    <property type="entry name" value="LRR_1"/>
    <property type="match status" value="1"/>
</dbReference>
<dbReference type="Pfam" id="PF13855">
    <property type="entry name" value="LRR_8"/>
    <property type="match status" value="2"/>
</dbReference>
<dbReference type="SMART" id="SM00364">
    <property type="entry name" value="LRR_BAC"/>
    <property type="match status" value="7"/>
</dbReference>
<dbReference type="SMART" id="SM00369">
    <property type="entry name" value="LRR_TYP"/>
    <property type="match status" value="7"/>
</dbReference>
<dbReference type="SUPFAM" id="SSF52058">
    <property type="entry name" value="L domain-like"/>
    <property type="match status" value="1"/>
</dbReference>
<dbReference type="PROSITE" id="PS51450">
    <property type="entry name" value="LRR"/>
    <property type="match status" value="8"/>
</dbReference>
<gene>
    <name type="primary">IRL3</name>
    <name type="ordered locus">Os04g0476700</name>
    <name type="ordered locus">LOC_Os04g40080</name>
    <name type="ORF">OSJNBa0044K18.1</name>
</gene>
<organism>
    <name type="scientific">Oryza sativa subsp. japonica</name>
    <name type="common">Rice</name>
    <dbReference type="NCBI Taxonomy" id="39947"/>
    <lineage>
        <taxon>Eukaryota</taxon>
        <taxon>Viridiplantae</taxon>
        <taxon>Streptophyta</taxon>
        <taxon>Embryophyta</taxon>
        <taxon>Tracheophyta</taxon>
        <taxon>Spermatophyta</taxon>
        <taxon>Magnoliopsida</taxon>
        <taxon>Liliopsida</taxon>
        <taxon>Poales</taxon>
        <taxon>Poaceae</taxon>
        <taxon>BOP clade</taxon>
        <taxon>Oryzoideae</taxon>
        <taxon>Oryzeae</taxon>
        <taxon>Oryzinae</taxon>
        <taxon>Oryza</taxon>
        <taxon>Oryza sativa</taxon>
    </lineage>
</organism>
<name>PIRL3_ORYSJ</name>
<evidence type="ECO:0000250" key="1"/>
<evidence type="ECO:0000255" key="2"/>
<evidence type="ECO:0000256" key="3">
    <source>
        <dbReference type="SAM" id="MobiDB-lite"/>
    </source>
</evidence>
<evidence type="ECO:0000269" key="4">
    <source>
    </source>
</evidence>
<evidence type="ECO:0000305" key="5"/>
<comment type="function">
    <text evidence="1">Leucine-rich repeat protein that likely mediates protein interactions, possibly in the context of signal transduction.</text>
</comment>
<comment type="tissue specificity">
    <text evidence="4">Widely expressed.</text>
</comment>
<comment type="disruption phenotype">
    <text evidence="4">No visible phenotype.</text>
</comment>
<comment type="similarity">
    <text evidence="5">Belongs to the SHOC2 family.</text>
</comment>
<comment type="sequence caution" evidence="5">
    <conflict type="erroneous gene model prediction">
        <sequence resource="EMBL-CDS" id="BAF14996"/>
    </conflict>
</comment>
<comment type="sequence caution" evidence="5">
    <conflict type="erroneous initiation">
        <sequence resource="EMBL-CDS" id="CAE05859"/>
    </conflict>
    <text>Truncated N-terminus.</text>
</comment>
<proteinExistence type="evidence at transcript level"/>